<sequence>MLINVSIKLIKLYQRLAPQKIRDACRFEPTCSNYAILALQKYGFWKGWKMALNRLGRCKYPNGGEDLP</sequence>
<organismHost>
    <name type="scientific">Haemophilus influenzae</name>
    <dbReference type="NCBI Taxonomy" id="727"/>
</organismHost>
<protein>
    <recommendedName>
        <fullName>Uncharacterized 7.9 kDa protein in int-C1 intergenic region</fullName>
    </recommendedName>
    <alternativeName>
        <fullName>ORF16</fullName>
    </alternativeName>
    <alternativeName>
        <fullName>ORF2</fullName>
    </alternativeName>
</protein>
<reference key="1">
    <citation type="journal article" date="1994" name="Mol. Microbiol.">
        <title>Identification of an HP1 phage protein required for site-specific excision.</title>
        <authorList>
            <person name="Esposito D."/>
            <person name="Scocca J.J."/>
        </authorList>
    </citation>
    <scope>NUCLEOTIDE SEQUENCE [GENOMIC DNA]</scope>
</reference>
<reference key="2">
    <citation type="journal article" date="1996" name="Nucleic Acids Res.">
        <title>The complete nucleotide sequence of bacteriophage HP1 DNA.</title>
        <authorList>
            <person name="Esposito D."/>
            <person name="Fitzmaurice W.P."/>
            <person name="Benjamin R.C."/>
            <person name="Goodman S.D."/>
            <person name="Waldman A.S."/>
            <person name="Scocca J.J."/>
        </authorList>
    </citation>
    <scope>NUCLEOTIDE SEQUENCE [LARGE SCALE GENOMIC DNA]</scope>
</reference>
<comment type="similarity">
    <text evidence="1">To bacterial proteins yidD.</text>
</comment>
<proteinExistence type="predicted"/>
<dbReference type="EMBL" id="U24159">
    <property type="protein sequence ID" value="AAB09184.1"/>
    <property type="molecule type" value="Genomic_DNA"/>
</dbReference>
<dbReference type="PIR" id="S72331">
    <property type="entry name" value="S72331"/>
</dbReference>
<dbReference type="RefSeq" id="NP_043468.1">
    <property type="nucleotide sequence ID" value="NC_001697.1"/>
</dbReference>
<dbReference type="GeneID" id="1261140"/>
<dbReference type="KEGG" id="vg:1261140"/>
<dbReference type="Proteomes" id="UP000001713">
    <property type="component" value="Segment"/>
</dbReference>
<dbReference type="InterPro" id="IPR002696">
    <property type="entry name" value="Membr_insert_effic_factor_YidD"/>
</dbReference>
<dbReference type="NCBIfam" id="TIGR00278">
    <property type="entry name" value="membrane protein insertion efficiency factor YidD"/>
    <property type="match status" value="1"/>
</dbReference>
<dbReference type="PANTHER" id="PTHR33383">
    <property type="entry name" value="MEMBRANE PROTEIN INSERTION EFFICIENCY FACTOR-RELATED"/>
    <property type="match status" value="1"/>
</dbReference>
<dbReference type="PANTHER" id="PTHR33383:SF1">
    <property type="entry name" value="MEMBRANE PROTEIN INSERTION EFFICIENCY FACTOR-RELATED"/>
    <property type="match status" value="1"/>
</dbReference>
<dbReference type="Pfam" id="PF01809">
    <property type="entry name" value="YidD"/>
    <property type="match status" value="1"/>
</dbReference>
<dbReference type="SMART" id="SM01234">
    <property type="entry name" value="Haemolytic"/>
    <property type="match status" value="1"/>
</dbReference>
<name>YO02_BPHC1</name>
<accession>P51701</accession>
<keyword id="KW-1185">Reference proteome</keyword>
<evidence type="ECO:0000305" key="1"/>
<organism>
    <name type="scientific">Haemophilus phage HP1 (strain HP1c1)</name>
    <name type="common">Bacteriophage HP1</name>
    <dbReference type="NCBI Taxonomy" id="1289570"/>
    <lineage>
        <taxon>Viruses</taxon>
        <taxon>Duplodnaviria</taxon>
        <taxon>Heunggongvirae</taxon>
        <taxon>Uroviricota</taxon>
        <taxon>Caudoviricetes</taxon>
        <taxon>Peduoviridae</taxon>
        <taxon>Hpunavirus</taxon>
        <taxon>Haemophilus phage HP1</taxon>
    </lineage>
</organism>
<feature type="chain" id="PRO_0000165316" description="Uncharacterized 7.9 kDa protein in int-C1 intergenic region">
    <location>
        <begin position="1"/>
        <end position="68"/>
    </location>
</feature>